<accession>P86011</accession>
<evidence type="ECO:0000250" key="1">
    <source>
        <dbReference type="UniProtKB" id="P00590"/>
    </source>
</evidence>
<evidence type="ECO:0000269" key="2">
    <source>
    </source>
</evidence>
<evidence type="ECO:0000303" key="3">
    <source>
    </source>
</evidence>
<evidence type="ECO:0000305" key="4"/>
<evidence type="ECO:0000305" key="5">
    <source>
    </source>
</evidence>
<comment type="function">
    <text evidence="1 2">Catalyzes the hydrolysis of complex carboxylic polyesters found in the cell wall of plants (PubMed:17043825). Degrades cutin, a macromolecule that forms the structure of the plant cuticle (PubMed:17043825). Allows pathogenic fungi to penetrate through the cuticular barrier into the host plant during the initial stage of fungal infection (By similarity).</text>
</comment>
<comment type="catalytic activity">
    <reaction evidence="5">
        <text>cutin + H2O = cutin monomers.</text>
        <dbReference type="EC" id="3.1.1.74"/>
    </reaction>
</comment>
<comment type="activity regulation">
    <text evidence="2">Inhibited by diisopropyl fluorophosphate (DFP).</text>
</comment>
<comment type="subcellular location">
    <subcellularLocation>
        <location evidence="2">Secreted</location>
    </subcellularLocation>
</comment>
<comment type="induction">
    <text evidence="2">By contact with cutin.</text>
</comment>
<comment type="miscellaneous">
    <text evidence="2">On the 2D-gel the determined MW is: 40.2 kDa.</text>
</comment>
<comment type="similarity">
    <text evidence="2">Belongs to the cutinase family.</text>
</comment>
<organism>
    <name type="scientific">Colletotrichum gloeosporioides</name>
    <name type="common">Anthracnose fungus</name>
    <name type="synonym">Glomerella cingulata</name>
    <dbReference type="NCBI Taxonomy" id="474922"/>
    <lineage>
        <taxon>Eukaryota</taxon>
        <taxon>Fungi</taxon>
        <taxon>Dikarya</taxon>
        <taxon>Ascomycota</taxon>
        <taxon>Pezizomycotina</taxon>
        <taxon>Sordariomycetes</taxon>
        <taxon>Hypocreomycetidae</taxon>
        <taxon>Glomerellales</taxon>
        <taxon>Glomerellaceae</taxon>
        <taxon>Colletotrichum</taxon>
        <taxon>Colletotrichum gloeosporioides species complex</taxon>
    </lineage>
</organism>
<keyword id="KW-0903">Direct protein sequencing</keyword>
<keyword id="KW-0378">Hydrolase</keyword>
<keyword id="KW-0964">Secreted</keyword>
<keyword id="KW-0719">Serine esterase</keyword>
<keyword id="KW-0843">Virulence</keyword>
<reference evidence="4" key="1">
    <citation type="journal article" date="2007" name="Appl. Microbiol. Biotechnol.">
        <title>Purification and identification of cutinases from Colletotrichum kahawae and Colletotrichum gloeosporioides.</title>
        <authorList>
            <person name="Chen Z."/>
            <person name="Franco C.F."/>
            <person name="Baptista R.P."/>
            <person name="Cabral J.M.S."/>
            <person name="Coelho A.V."/>
            <person name="Rodrigues C.J. Jr."/>
            <person name="Melo E.P."/>
        </authorList>
    </citation>
    <scope>PROTEIN SEQUENCE</scope>
    <scope>FUNCTION</scope>
    <scope>CATALYTIC ACTIVITY</scope>
    <scope>ACTIVITY REGULATION</scope>
    <scope>SUBCELLULAR LOCATION</scope>
    <scope>INDUCTION</scope>
    <source>
        <strain evidence="2">Ch27</strain>
    </source>
</reference>
<dbReference type="EC" id="3.1.1.74" evidence="5"/>
<dbReference type="GO" id="GO:0005576">
    <property type="term" value="C:extracellular region"/>
    <property type="evidence" value="ECO:0000314"/>
    <property type="project" value="UniProtKB"/>
</dbReference>
<dbReference type="GO" id="GO:0050525">
    <property type="term" value="F:cutinase activity"/>
    <property type="evidence" value="ECO:0000314"/>
    <property type="project" value="UniProtKB"/>
</dbReference>
<feature type="chain" id="PRO_0000352645" description="Cutinase 2">
    <location>
        <begin position="1"/>
        <end position="21" status="greater than"/>
    </location>
</feature>
<feature type="unsure residue" evidence="2">
    <location>
        <position position="17"/>
    </location>
</feature>
<feature type="non-terminal residue" evidence="3">
    <location>
        <position position="21"/>
    </location>
</feature>
<protein>
    <recommendedName>
        <fullName evidence="3">Cutinase 2</fullName>
        <ecNumber evidence="5">3.1.1.74</ecNumber>
    </recommendedName>
    <alternativeName>
        <fullName>Cutin hydrolase 2</fullName>
    </alternativeName>
</protein>
<sequence length="21" mass="2133">DINGGGATLPQKLYQTSGVLT</sequence>
<name>CUTI2_COLGL</name>
<proteinExistence type="evidence at protein level"/>